<reference key="1">
    <citation type="journal article" date="1997" name="J. Biol. Chem.">
        <title>Evolution of fucosyltransferase genes in vertebrates.</title>
        <authorList>
            <person name="Costache M."/>
            <person name="Apoil P.-A."/>
            <person name="Cailleau A."/>
            <person name="Elmgren A."/>
            <person name="Larson G."/>
            <person name="Henry S."/>
            <person name="Blancher A."/>
            <person name="Iordachescu D."/>
            <person name="Oriol R."/>
            <person name="Mollicone R."/>
        </authorList>
    </citation>
    <scope>NUCLEOTIDE SEQUENCE [GENOMIC DNA]</scope>
    <scope>VARIANTS LEU-124; GLU-172 AND ALA-192</scope>
</reference>
<dbReference type="EC" id="2.4.1.152" evidence="1"/>
<dbReference type="EMBL" id="Y14035">
    <property type="protein sequence ID" value="CAA74362.1"/>
    <property type="molecule type" value="Genomic_DNA"/>
</dbReference>
<dbReference type="RefSeq" id="NP_001009150.1">
    <property type="nucleotide sequence ID" value="NM_001009150.1"/>
</dbReference>
<dbReference type="SMR" id="P56434"/>
<dbReference type="FunCoup" id="P56434">
    <property type="interactions" value="118"/>
</dbReference>
<dbReference type="STRING" id="9598.ENSPTRP00000049078"/>
<dbReference type="CAZy" id="GT10">
    <property type="family name" value="Glycosyltransferase Family 10"/>
</dbReference>
<dbReference type="GlyCosmos" id="P56434">
    <property type="glycosylation" value="4 sites, No reported glycans"/>
</dbReference>
<dbReference type="PaxDb" id="9598-ENSPTRP00000049080"/>
<dbReference type="GeneID" id="493976"/>
<dbReference type="KEGG" id="ptr:493976"/>
<dbReference type="CTD" id="2528"/>
<dbReference type="eggNOG" id="KOG2619">
    <property type="taxonomic scope" value="Eukaryota"/>
</dbReference>
<dbReference type="InParanoid" id="P56434"/>
<dbReference type="OrthoDB" id="1608at9604"/>
<dbReference type="BRENDA" id="2.4.1.152">
    <property type="organism ID" value="4497"/>
</dbReference>
<dbReference type="UniPathway" id="UPA00378"/>
<dbReference type="Proteomes" id="UP000002277">
    <property type="component" value="Unplaced"/>
</dbReference>
<dbReference type="GO" id="GO:0005576">
    <property type="term" value="C:extracellular region"/>
    <property type="evidence" value="ECO:0000250"/>
    <property type="project" value="UniProtKB"/>
</dbReference>
<dbReference type="GO" id="GO:0005794">
    <property type="term" value="C:Golgi apparatus"/>
    <property type="evidence" value="ECO:0000250"/>
    <property type="project" value="UniProtKB"/>
</dbReference>
<dbReference type="GO" id="GO:0032580">
    <property type="term" value="C:Golgi cisterna membrane"/>
    <property type="evidence" value="ECO:0007669"/>
    <property type="project" value="UniProtKB-SubCell"/>
</dbReference>
<dbReference type="GO" id="GO:0017083">
    <property type="term" value="F:4-galactosyl-N-acetylglucosaminide 3-alpha-L-fucosyltransferase activity"/>
    <property type="evidence" value="ECO:0000250"/>
    <property type="project" value="UniProtKB"/>
</dbReference>
<dbReference type="GO" id="GO:0046920">
    <property type="term" value="F:alpha-(1-&gt;3)-fucosyltransferase activity"/>
    <property type="evidence" value="ECO:0000318"/>
    <property type="project" value="GO_Central"/>
</dbReference>
<dbReference type="GO" id="GO:0036065">
    <property type="term" value="P:fucosylation"/>
    <property type="evidence" value="ECO:0000318"/>
    <property type="project" value="GO_Central"/>
</dbReference>
<dbReference type="GO" id="GO:0006688">
    <property type="term" value="P:glycosphingolipid biosynthetic process"/>
    <property type="evidence" value="ECO:0000250"/>
    <property type="project" value="UniProtKB"/>
</dbReference>
<dbReference type="GO" id="GO:0036071">
    <property type="term" value="P:N-glycan fucosylation"/>
    <property type="evidence" value="ECO:0000250"/>
    <property type="project" value="UniProtKB"/>
</dbReference>
<dbReference type="GO" id="GO:0006487">
    <property type="term" value="P:protein N-linked glycosylation"/>
    <property type="evidence" value="ECO:0000250"/>
    <property type="project" value="UniProtKB"/>
</dbReference>
<dbReference type="GO" id="GO:0006493">
    <property type="term" value="P:protein O-linked glycosylation"/>
    <property type="evidence" value="ECO:0000250"/>
    <property type="project" value="UniProtKB"/>
</dbReference>
<dbReference type="FunFam" id="3.40.50.11660:FF:000001">
    <property type="entry name" value="alpha-(1,3)-fucosyltransferase 9"/>
    <property type="match status" value="1"/>
</dbReference>
<dbReference type="Gene3D" id="3.40.50.11660">
    <property type="entry name" value="Glycosyl transferase family 10, C-terminal domain"/>
    <property type="match status" value="1"/>
</dbReference>
<dbReference type="InterPro" id="IPR055270">
    <property type="entry name" value="Glyco_tran_10_C"/>
</dbReference>
<dbReference type="InterPro" id="IPR031481">
    <property type="entry name" value="Glyco_tran_10_N"/>
</dbReference>
<dbReference type="InterPro" id="IPR001503">
    <property type="entry name" value="Glyco_trans_10"/>
</dbReference>
<dbReference type="InterPro" id="IPR038577">
    <property type="entry name" value="GT10-like_C_sf"/>
</dbReference>
<dbReference type="PANTHER" id="PTHR11929:SF227">
    <property type="entry name" value="4-GALACTOSYL-N-ACETYLGLUCOSAMINIDE 3-ALPHA-L-FUCOSYLTRANSFERASE FUT6"/>
    <property type="match status" value="1"/>
</dbReference>
<dbReference type="PANTHER" id="PTHR11929">
    <property type="entry name" value="ALPHA- 1,3 -FUCOSYLTRANSFERASE"/>
    <property type="match status" value="1"/>
</dbReference>
<dbReference type="Pfam" id="PF17039">
    <property type="entry name" value="Glyco_tran_10_N"/>
    <property type="match status" value="1"/>
</dbReference>
<dbReference type="Pfam" id="PF00852">
    <property type="entry name" value="Glyco_transf_10"/>
    <property type="match status" value="1"/>
</dbReference>
<dbReference type="SUPFAM" id="SSF53756">
    <property type="entry name" value="UDP-Glycosyltransferase/glycogen phosphorylase"/>
    <property type="match status" value="1"/>
</dbReference>
<protein>
    <recommendedName>
        <fullName evidence="1">4-galactosyl-N-acetylglucosaminide 3-alpha-L-fucosyltransferase FUT6</fullName>
        <ecNumber evidence="1">2.4.1.152</ecNumber>
    </recommendedName>
    <alternativeName>
        <fullName>Fucosyltransferase 6</fullName>
    </alternativeName>
    <alternativeName>
        <fullName>Fucosyltransferase VI</fullName>
        <shortName>Fuc-TVI</shortName>
        <shortName>FucT-VI</shortName>
    </alternativeName>
    <alternativeName>
        <fullName>Galactoside 3-L-fucosyltransferase</fullName>
    </alternativeName>
</protein>
<organism>
    <name type="scientific">Pan troglodytes</name>
    <name type="common">Chimpanzee</name>
    <dbReference type="NCBI Taxonomy" id="9598"/>
    <lineage>
        <taxon>Eukaryota</taxon>
        <taxon>Metazoa</taxon>
        <taxon>Chordata</taxon>
        <taxon>Craniata</taxon>
        <taxon>Vertebrata</taxon>
        <taxon>Euteleostomi</taxon>
        <taxon>Mammalia</taxon>
        <taxon>Eutheria</taxon>
        <taxon>Euarchontoglires</taxon>
        <taxon>Primates</taxon>
        <taxon>Haplorrhini</taxon>
        <taxon>Catarrhini</taxon>
        <taxon>Hominidae</taxon>
        <taxon>Pan</taxon>
    </lineage>
</organism>
<sequence length="359" mass="41893">MDPLGPAKPQWSWRCCLTTLLFQLLVAVCFFSYLRVSRDDPTVYPNGSHFPDSTGTPAHSIPLILLWTWPFNKPIALPRCSEMVPGTADCNITADRKVYPQADAVIVHHREVMYNPSAQLPRSPRRQGQRWIWFSMESPSNCRHLEALDGYFNLTMSYRSDSDIFTPYGWLQPWSGQPVHPPLNLSAKTELVAWAVSNWGPNSARVRYYQSLQAHLKVDVYGRSHKPLPQGTMMETLSRYKFYLAFENSLHPDYITEKLWRNALEAWAVPVVLGPSRSNYERFLPPDAFIHVDDFQSPKDLARYLQELDKDHARYLSYFRWRETLRPRFFSWALAFCKACWKLQEESRYQTRSIAAWFT</sequence>
<keyword id="KW-0325">Glycoprotein</keyword>
<keyword id="KW-0328">Glycosyltransferase</keyword>
<keyword id="KW-0333">Golgi apparatus</keyword>
<keyword id="KW-0443">Lipid metabolism</keyword>
<keyword id="KW-0472">Membrane</keyword>
<keyword id="KW-1185">Reference proteome</keyword>
<keyword id="KW-0964">Secreted</keyword>
<keyword id="KW-0735">Signal-anchor</keyword>
<keyword id="KW-0808">Transferase</keyword>
<keyword id="KW-0812">Transmembrane</keyword>
<keyword id="KW-1133">Transmembrane helix</keyword>
<evidence type="ECO:0000250" key="1">
    <source>
        <dbReference type="UniProtKB" id="P51993"/>
    </source>
</evidence>
<evidence type="ECO:0000255" key="2"/>
<evidence type="ECO:0000269" key="3">
    <source>
    </source>
</evidence>
<evidence type="ECO:0000305" key="4"/>
<gene>
    <name evidence="1" type="primary">FUT6</name>
</gene>
<feature type="chain" id="PRO_0000221111" description="4-galactosyl-N-acetylglucosaminide 3-alpha-L-fucosyltransferase FUT6">
    <location>
        <begin position="1"/>
        <end position="359"/>
    </location>
</feature>
<feature type="topological domain" description="Cytoplasmic" evidence="2">
    <location>
        <begin position="1"/>
        <end position="14"/>
    </location>
</feature>
<feature type="transmembrane region" description="Helical; Signal-anchor for type II membrane protein" evidence="2">
    <location>
        <begin position="15"/>
        <end position="34"/>
    </location>
</feature>
<feature type="topological domain" description="Lumenal" evidence="2">
    <location>
        <begin position="35"/>
        <end position="359"/>
    </location>
</feature>
<feature type="region of interest" description="determines site-specific fucosylation" evidence="1">
    <location>
        <begin position="73"/>
        <end position="112"/>
    </location>
</feature>
<feature type="glycosylation site" description="N-linked (GlcNAc...) asparagine" evidence="2">
    <location>
        <position position="46"/>
    </location>
</feature>
<feature type="glycosylation site" description="N-linked (GlcNAc...) asparagine" evidence="2">
    <location>
        <position position="91"/>
    </location>
</feature>
<feature type="glycosylation site" description="N-linked (GlcNAc...) asparagine" evidence="2">
    <location>
        <position position="153"/>
    </location>
</feature>
<feature type="glycosylation site" description="N-linked (GlcNAc...) asparagine" evidence="2">
    <location>
        <position position="184"/>
    </location>
</feature>
<feature type="sequence variant" id="VAR_018694" description="In allele B." evidence="3">
    <original>P</original>
    <variation>L</variation>
    <location>
        <position position="124"/>
    </location>
</feature>
<feature type="sequence variant" id="VAR_018695" description="In allele B." evidence="3">
    <original>Q</original>
    <variation>E</variation>
    <location>
        <position position="172"/>
    </location>
</feature>
<feature type="sequence variant" id="VAR_018696" description="In allele B." evidence="3">
    <original>V</original>
    <variation>A</variation>
    <location>
        <position position="192"/>
    </location>
</feature>
<comment type="function">
    <text evidence="1">Catalyzes the transfer of L-fucose, from a guanosine diphosphate-beta-L-fucose, to the N-acetyl glucosamine (GlcNAc) of a distal alpha2,3 sialylated lactosamine unit of a glycoprotein- or glycolipid-linked sialopolylactosamines chain or of a distal or internal lactosamine unit of a neutral glycoprotein- or glycolipid-linked polylactosamines chain through an alpha-1,3 glycosidic linkage and participates in surface expression of the sialyl Lewis X (sLe(x)), Lewis X (Le(x)) and non sialylated VIM2 determinants. Moreover transfers fucose to H-type 2 (Fucalpha1-2Galbeta1-4GlcNAc) chain acceptor substrates and participates in difucosylated sialyl Lewis x determinants. Also fucosylates a polylactosamine substrate having a 6 sulfate modification at the GlcNAc moiety and gives rise to sialyl and non-sialyl 6-sulfo lewis X. Does not have activity towards type 1 ((Galbeta1-3GlcNAc)) and H-type 1 chain (Fucalpha1-2Galbeta1-3GlcNAc) acceptors substrates.</text>
</comment>
<comment type="catalytic activity">
    <reaction evidence="1">
        <text>a beta-D-galactosyl-(1-&gt;4)-N-acetyl-beta-D-glucosaminyl derivative + GDP-beta-L-fucose = a beta-D-galactosyl-(1-&gt;4)-[alpha-L-fucosyl-(1-&gt;3)]-N-acetyl-beta-D-glucosaminyl derivative + GDP + H(+)</text>
        <dbReference type="Rhea" id="RHEA:14257"/>
        <dbReference type="ChEBI" id="CHEBI:15378"/>
        <dbReference type="ChEBI" id="CHEBI:57273"/>
        <dbReference type="ChEBI" id="CHEBI:58189"/>
        <dbReference type="ChEBI" id="CHEBI:133507"/>
        <dbReference type="ChEBI" id="CHEBI:137941"/>
        <dbReference type="EC" id="2.4.1.152"/>
    </reaction>
    <physiologicalReaction direction="left-to-right" evidence="1">
        <dbReference type="Rhea" id="RHEA:14258"/>
    </physiologicalReaction>
</comment>
<comment type="catalytic activity">
    <reaction evidence="1">
        <text>an N-acetyl-alpha-neuraminyl-(2-&gt;3)-beta-D-galactosyl-(1-&gt;4)-N-acetyl-beta-D-glucosaminyl derivative + GDP-beta-L-fucose = an alpha-Neu5Ac-(2-&gt;3)-beta-D-Gal-(1-&gt;4)-[alpha-L-Fuc-(1-&gt;3)]-beta-D-GlcNAc derivative + GDP + H(+)</text>
        <dbReference type="Rhea" id="RHEA:56076"/>
        <dbReference type="ChEBI" id="CHEBI:15378"/>
        <dbReference type="ChEBI" id="CHEBI:57273"/>
        <dbReference type="ChEBI" id="CHEBI:58189"/>
        <dbReference type="ChEBI" id="CHEBI:136545"/>
        <dbReference type="ChEBI" id="CHEBI:139509"/>
    </reaction>
    <physiologicalReaction direction="left-to-right" evidence="1">
        <dbReference type="Rhea" id="RHEA:56077"/>
    </physiologicalReaction>
</comment>
<comment type="catalytic activity">
    <reaction evidence="1">
        <text>an alpha-Neu5Ac-(2-&gt;3)-beta-D-Gal-(1-&gt;4)-beta-D-GlcNAc-(1-&gt;3)-beta-D-Gal-(1-&gt;4)-[alpha-L-Fuc-(1-&gt;3)]-beta-D-GlcNAc derivative + GDP-beta-L-fucose = an alpha-Neu5Ac-(2-&gt;3)-beta-D-Gal-(1-&gt;4)-[alpha-L-Fuc-(1-&gt;3)]-beta-D-GlcNAc-(1-&gt;3)-beta-D-Gal-(1-&gt;4)-[alpha-L-Fuc-(1-&gt;3)]-beta-D-GlcNAc derivative + GDP + H(+)</text>
        <dbReference type="Rhea" id="RHEA:52864"/>
        <dbReference type="ChEBI" id="CHEBI:15378"/>
        <dbReference type="ChEBI" id="CHEBI:57273"/>
        <dbReference type="ChEBI" id="CHEBI:58189"/>
        <dbReference type="ChEBI" id="CHEBI:145342"/>
        <dbReference type="ChEBI" id="CHEBI:145343"/>
    </reaction>
    <physiologicalReaction direction="left-to-right" evidence="1">
        <dbReference type="Rhea" id="RHEA:52865"/>
    </physiologicalReaction>
</comment>
<comment type="catalytic activity">
    <reaction evidence="1">
        <text>a neolactoside nLc6Cer + GDP-beta-L-fucose = beta-D-Gal-(1-&gt;4)-[alpha-L-Fuc-(1-&gt;3)]-beta-D-GlcNAc-(1-&gt;3)-beta-D-Gal-(1-&gt;4)-beta-D-GlcNAc-(1-&gt;3)-beta-D-Gal-(1-&gt;4)-beta-D-Glc-(1&lt;-&gt;1')-Cer + GDP + H(+)</text>
        <dbReference type="Rhea" id="RHEA:48368"/>
        <dbReference type="ChEBI" id="CHEBI:15378"/>
        <dbReference type="ChEBI" id="CHEBI:57273"/>
        <dbReference type="ChEBI" id="CHEBI:58189"/>
        <dbReference type="ChEBI" id="CHEBI:90357"/>
        <dbReference type="ChEBI" id="CHEBI:90360"/>
    </reaction>
    <physiologicalReaction direction="left-to-right" evidence="1">
        <dbReference type="Rhea" id="RHEA:48369"/>
    </physiologicalReaction>
</comment>
<comment type="catalytic activity">
    <reaction evidence="1">
        <text>a neolactoside nLc6Cer + GDP-beta-L-fucose = beta-D-galactosyl-(1-&gt;4)-N-acetyl-beta-D-glucosaminyl-(1-&gt;3)-beta-D-galactosyl-(1-&gt;4)-[alpha-L-fucosyl-(1-&gt;3)]-N-acetyl-beta-D-glucosaminyl-(1-&gt;3)-beta-D-galactosyl-(1-&gt;4)-beta-D-glucosyl-(1&lt;-&gt;1')-ceramide + GDP + H(+)</text>
        <dbReference type="Rhea" id="RHEA:48364"/>
        <dbReference type="ChEBI" id="CHEBI:15378"/>
        <dbReference type="ChEBI" id="CHEBI:57273"/>
        <dbReference type="ChEBI" id="CHEBI:58189"/>
        <dbReference type="ChEBI" id="CHEBI:90357"/>
        <dbReference type="ChEBI" id="CHEBI:90358"/>
    </reaction>
    <physiologicalReaction direction="left-to-right" evidence="1">
        <dbReference type="Rhea" id="RHEA:48365"/>
    </physiologicalReaction>
</comment>
<comment type="catalytic activity">
    <reaction evidence="1">
        <text>a neolactoside VI(3)-alpha-NeuNAc-nLc6Cer + GDP-beta-L-fucose = a neolactoside VI(3)-alpha-NeuAc,V(3)-alphaFuc-nLc6Cer + GDP + H(+)</text>
        <dbReference type="Rhea" id="RHEA:48356"/>
        <dbReference type="ChEBI" id="CHEBI:15378"/>
        <dbReference type="ChEBI" id="CHEBI:57273"/>
        <dbReference type="ChEBI" id="CHEBI:58189"/>
        <dbReference type="ChEBI" id="CHEBI:90336"/>
        <dbReference type="ChEBI" id="CHEBI:90339"/>
    </reaction>
    <physiologicalReaction direction="left-to-right" evidence="1">
        <dbReference type="Rhea" id="RHEA:48357"/>
    </physiologicalReaction>
</comment>
<comment type="catalytic activity">
    <reaction evidence="1">
        <text>beta-D-galactosyl-(1-&gt;4)-N-acetyl-D-glucosamine + GDP-beta-L-fucose = beta-D-galactosyl-(1-&gt;4)-[alpha-L-fucosyl-(1-&gt;3)]-N-acetyl-D-glucosamine + GDP + H(+)</text>
        <dbReference type="Rhea" id="RHEA:62824"/>
        <dbReference type="ChEBI" id="CHEBI:15378"/>
        <dbReference type="ChEBI" id="CHEBI:57273"/>
        <dbReference type="ChEBI" id="CHEBI:58189"/>
        <dbReference type="ChEBI" id="CHEBI:60152"/>
        <dbReference type="ChEBI" id="CHEBI:62287"/>
    </reaction>
    <physiologicalReaction direction="left-to-right" evidence="1">
        <dbReference type="Rhea" id="RHEA:62825"/>
    </physiologicalReaction>
</comment>
<comment type="catalytic activity">
    <reaction evidence="1">
        <text>N-acetyl-alpha-neuraminosyl-(2-&gt;3)-beta-D-galactosyl-(1-&gt;4)-N-acetyl-beta-D-glucosamine + GDP-beta-L-fucose = N-acetyl-alpha-neuraminosyl-(2-&gt;3)-beta-D-galactosyl-(1-&gt;4)-[alpha-L-fucosyl-(1-&gt;3)]-N-acetyl-beta-D-glucosamine + GDP + H(+)</text>
        <dbReference type="Rhea" id="RHEA:62836"/>
        <dbReference type="ChEBI" id="CHEBI:15378"/>
        <dbReference type="ChEBI" id="CHEBI:57273"/>
        <dbReference type="ChEBI" id="CHEBI:58189"/>
        <dbReference type="ChEBI" id="CHEBI:145937"/>
        <dbReference type="ChEBI" id="CHEBI:145938"/>
    </reaction>
    <physiologicalReaction direction="left-to-right" evidence="1">
        <dbReference type="Rhea" id="RHEA:62837"/>
    </physiologicalReaction>
</comment>
<comment type="catalytic activity">
    <reaction evidence="1">
        <text>lactose + GDP-beta-L-fucose = beta-D-galactosyl-(1-&gt;4)-[alpha-L-fucosyl-(1-&gt;3)]-D-glucose + GDP + H(+)</text>
        <dbReference type="Rhea" id="RHEA:62888"/>
        <dbReference type="ChEBI" id="CHEBI:15378"/>
        <dbReference type="ChEBI" id="CHEBI:17716"/>
        <dbReference type="ChEBI" id="CHEBI:57273"/>
        <dbReference type="ChEBI" id="CHEBI:58189"/>
        <dbReference type="ChEBI" id="CHEBI:90065"/>
    </reaction>
    <physiologicalReaction direction="left-to-right" evidence="1">
        <dbReference type="Rhea" id="RHEA:62889"/>
    </physiologicalReaction>
</comment>
<comment type="catalytic activity">
    <reaction evidence="1">
        <text>alpha-L-Fuc-(1-&gt;2)-beta-D-Gal-(1-&gt;4)-D-Glc + GDP-beta-L-fucose = alpha-L-Fuc-(1-&gt;2)-beta-D-Gal-(1-&gt;4)-[alpha-L-Fuc-(1-&gt;3)]-D-Glc + GDP + H(+)</text>
        <dbReference type="Rhea" id="RHEA:64016"/>
        <dbReference type="ChEBI" id="CHEBI:15378"/>
        <dbReference type="ChEBI" id="CHEBI:57273"/>
        <dbReference type="ChEBI" id="CHEBI:58189"/>
        <dbReference type="ChEBI" id="CHEBI:147155"/>
        <dbReference type="ChEBI" id="CHEBI:149659"/>
    </reaction>
    <physiologicalReaction direction="left-to-right" evidence="1">
        <dbReference type="Rhea" id="RHEA:64017"/>
    </physiologicalReaction>
</comment>
<comment type="catalytic activity">
    <reaction evidence="1">
        <text>a beta-D-galactosyl-(1-&gt;4)-N-acetyl-beta-D-6-sulfooxy-glucosaminyl derivative + GDP-beta-L-fucose = a beta-D-galactosyl-(1-&gt;4)-[alpha-L-fucosyl-(1-&gt;3)]-N-acetyl-beta-D-6-sulfooxy-glucosaminyl derivative + GDP + H(+)</text>
        <dbReference type="Rhea" id="RHEA:64032"/>
        <dbReference type="ChEBI" id="CHEBI:15378"/>
        <dbReference type="ChEBI" id="CHEBI:57273"/>
        <dbReference type="ChEBI" id="CHEBI:58189"/>
        <dbReference type="ChEBI" id="CHEBI:149663"/>
        <dbReference type="ChEBI" id="CHEBI:149664"/>
    </reaction>
</comment>
<comment type="pathway">
    <text evidence="1">Protein modification; protein glycosylation.</text>
</comment>
<comment type="subunit">
    <text evidence="1">Homodimer and monomer. Monomer (secreted form).</text>
</comment>
<comment type="subcellular location">
    <subcellularLocation>
        <location evidence="1">Golgi apparatus</location>
        <location evidence="1">Golgi stack membrane</location>
        <topology evidence="1">Single-pass type II membrane protein</topology>
    </subcellularLocation>
    <subcellularLocation>
        <location evidence="1">Golgi apparatus</location>
    </subcellularLocation>
    <subcellularLocation>
        <location evidence="1">Secreted</location>
    </subcellularLocation>
    <text evidence="1">Membrane-bound form in trans cisternae of Golgi.</text>
</comment>
<comment type="PTM">
    <text evidence="1">N-glycosylated.</text>
</comment>
<comment type="PTM">
    <text evidence="1">Proteolytic cleavage releases a secreted glycoform of 43 kDa.</text>
</comment>
<comment type="polymorphism">
    <text>There are two alleles, A and B. Allele A has Pro-124, Gln-172 and Val-192. Allele B has Leu-124, Glu-172 and Ala-192.</text>
</comment>
<comment type="similarity">
    <text evidence="4">Belongs to the glycosyltransferase 10 family.</text>
</comment>
<name>FUT6_PANTR</name>
<proteinExistence type="inferred from homology"/>
<accession>P56434</accession>